<reference key="1">
    <citation type="submission" date="2007-11" db="EMBL/GenBank/DDBJ databases">
        <title>The genome sequence of the hyperthermophilic bacterium Thermotoga neapolitana.</title>
        <authorList>
            <person name="Lim S.K."/>
            <person name="Kim J.S."/>
            <person name="Cha S.H."/>
            <person name="Park B.C."/>
            <person name="Lee D.S."/>
            <person name="Tae H.S."/>
            <person name="Kim S.-J."/>
            <person name="Kim J.J."/>
            <person name="Park K.J."/>
            <person name="Lee S.Y."/>
        </authorList>
    </citation>
    <scope>NUCLEOTIDE SEQUENCE [LARGE SCALE GENOMIC DNA]</scope>
    <source>
        <strain>ATCC 49049 / DSM 4359 / NBRC 107923 / NS-E</strain>
    </source>
</reference>
<gene>
    <name evidence="1" type="primary">mraY</name>
    <name type="ordered locus">CTN_0451</name>
</gene>
<dbReference type="EC" id="2.7.8.13" evidence="1"/>
<dbReference type="EMBL" id="CP000916">
    <property type="protein sequence ID" value="ACM22627.1"/>
    <property type="molecule type" value="Genomic_DNA"/>
</dbReference>
<dbReference type="RefSeq" id="WP_015918946.1">
    <property type="nucleotide sequence ID" value="NC_011978.1"/>
</dbReference>
<dbReference type="SMR" id="B9K6P4"/>
<dbReference type="STRING" id="309803.CTN_0451"/>
<dbReference type="KEGG" id="tna:CTN_0451"/>
<dbReference type="eggNOG" id="COG0472">
    <property type="taxonomic scope" value="Bacteria"/>
</dbReference>
<dbReference type="HOGENOM" id="CLU_023982_0_1_0"/>
<dbReference type="UniPathway" id="UPA00219"/>
<dbReference type="Proteomes" id="UP000000445">
    <property type="component" value="Chromosome"/>
</dbReference>
<dbReference type="GO" id="GO:0005886">
    <property type="term" value="C:plasma membrane"/>
    <property type="evidence" value="ECO:0007669"/>
    <property type="project" value="UniProtKB-SubCell"/>
</dbReference>
<dbReference type="GO" id="GO:0046872">
    <property type="term" value="F:metal ion binding"/>
    <property type="evidence" value="ECO:0007669"/>
    <property type="project" value="UniProtKB-KW"/>
</dbReference>
<dbReference type="GO" id="GO:0008963">
    <property type="term" value="F:phospho-N-acetylmuramoyl-pentapeptide-transferase activity"/>
    <property type="evidence" value="ECO:0007669"/>
    <property type="project" value="UniProtKB-UniRule"/>
</dbReference>
<dbReference type="GO" id="GO:0051992">
    <property type="term" value="F:UDP-N-acetylmuramoyl-L-alanyl-D-glutamyl-meso-2,6-diaminopimelyl-D-alanyl-D-alanine:undecaprenyl-phosphate transferase activity"/>
    <property type="evidence" value="ECO:0007669"/>
    <property type="project" value="RHEA"/>
</dbReference>
<dbReference type="GO" id="GO:0051301">
    <property type="term" value="P:cell division"/>
    <property type="evidence" value="ECO:0007669"/>
    <property type="project" value="UniProtKB-KW"/>
</dbReference>
<dbReference type="GO" id="GO:0071555">
    <property type="term" value="P:cell wall organization"/>
    <property type="evidence" value="ECO:0007669"/>
    <property type="project" value="UniProtKB-KW"/>
</dbReference>
<dbReference type="GO" id="GO:0009252">
    <property type="term" value="P:peptidoglycan biosynthetic process"/>
    <property type="evidence" value="ECO:0007669"/>
    <property type="project" value="UniProtKB-UniRule"/>
</dbReference>
<dbReference type="GO" id="GO:0008360">
    <property type="term" value="P:regulation of cell shape"/>
    <property type="evidence" value="ECO:0007669"/>
    <property type="project" value="UniProtKB-KW"/>
</dbReference>
<dbReference type="CDD" id="cd06852">
    <property type="entry name" value="GT_MraY"/>
    <property type="match status" value="1"/>
</dbReference>
<dbReference type="HAMAP" id="MF_00038">
    <property type="entry name" value="MraY"/>
    <property type="match status" value="1"/>
</dbReference>
<dbReference type="InterPro" id="IPR000715">
    <property type="entry name" value="Glycosyl_transferase_4"/>
</dbReference>
<dbReference type="InterPro" id="IPR003524">
    <property type="entry name" value="PNAcMuramoyl-5peptid_Trfase"/>
</dbReference>
<dbReference type="InterPro" id="IPR018480">
    <property type="entry name" value="PNAcMuramoyl-5peptid_Trfase_CS"/>
</dbReference>
<dbReference type="NCBIfam" id="TIGR00445">
    <property type="entry name" value="mraY"/>
    <property type="match status" value="1"/>
</dbReference>
<dbReference type="PANTHER" id="PTHR22926">
    <property type="entry name" value="PHOSPHO-N-ACETYLMURAMOYL-PENTAPEPTIDE-TRANSFERASE"/>
    <property type="match status" value="1"/>
</dbReference>
<dbReference type="PANTHER" id="PTHR22926:SF5">
    <property type="entry name" value="PHOSPHO-N-ACETYLMURAMOYL-PENTAPEPTIDE-TRANSFERASE HOMOLOG"/>
    <property type="match status" value="1"/>
</dbReference>
<dbReference type="Pfam" id="PF00953">
    <property type="entry name" value="Glycos_transf_4"/>
    <property type="match status" value="1"/>
</dbReference>
<dbReference type="Pfam" id="PF10555">
    <property type="entry name" value="MraY_sig1"/>
    <property type="match status" value="1"/>
</dbReference>
<dbReference type="PROSITE" id="PS01347">
    <property type="entry name" value="MRAY_1"/>
    <property type="match status" value="1"/>
</dbReference>
<dbReference type="PROSITE" id="PS01348">
    <property type="entry name" value="MRAY_2"/>
    <property type="match status" value="1"/>
</dbReference>
<proteinExistence type="inferred from homology"/>
<evidence type="ECO:0000255" key="1">
    <source>
        <dbReference type="HAMAP-Rule" id="MF_00038"/>
    </source>
</evidence>
<protein>
    <recommendedName>
        <fullName evidence="1">Phospho-N-acetylmuramoyl-pentapeptide-transferase</fullName>
        <ecNumber evidence="1">2.7.8.13</ecNumber>
    </recommendedName>
    <alternativeName>
        <fullName evidence="1">UDP-MurNAc-pentapeptide phosphotransferase</fullName>
    </alternativeName>
</protein>
<organism>
    <name type="scientific">Thermotoga neapolitana (strain ATCC 49049 / DSM 4359 / NBRC 107923 / NS-E)</name>
    <dbReference type="NCBI Taxonomy" id="309803"/>
    <lineage>
        <taxon>Bacteria</taxon>
        <taxon>Thermotogati</taxon>
        <taxon>Thermotogota</taxon>
        <taxon>Thermotogae</taxon>
        <taxon>Thermotogales</taxon>
        <taxon>Thermotogaceae</taxon>
        <taxon>Thermotoga</taxon>
    </lineage>
</organism>
<keyword id="KW-0131">Cell cycle</keyword>
<keyword id="KW-0132">Cell division</keyword>
<keyword id="KW-0997">Cell inner membrane</keyword>
<keyword id="KW-1003">Cell membrane</keyword>
<keyword id="KW-0133">Cell shape</keyword>
<keyword id="KW-0961">Cell wall biogenesis/degradation</keyword>
<keyword id="KW-0460">Magnesium</keyword>
<keyword id="KW-0472">Membrane</keyword>
<keyword id="KW-0479">Metal-binding</keyword>
<keyword id="KW-0573">Peptidoglycan synthesis</keyword>
<keyword id="KW-0808">Transferase</keyword>
<keyword id="KW-0812">Transmembrane</keyword>
<keyword id="KW-1133">Transmembrane helix</keyword>
<comment type="function">
    <text evidence="1">Catalyzes the initial step of the lipid cycle reactions in the biosynthesis of the cell wall peptidoglycan: transfers peptidoglycan precursor phospho-MurNAc-pentapeptide from UDP-MurNAc-pentapeptide onto the lipid carrier undecaprenyl phosphate, yielding undecaprenyl-pyrophosphoryl-MurNAc-pentapeptide, known as lipid I.</text>
</comment>
<comment type="catalytic activity">
    <reaction evidence="1">
        <text>UDP-N-acetyl-alpha-D-muramoyl-L-alanyl-gamma-D-glutamyl-meso-2,6-diaminopimeloyl-D-alanyl-D-alanine + di-trans,octa-cis-undecaprenyl phosphate = di-trans,octa-cis-undecaprenyl diphospho-N-acetyl-alpha-D-muramoyl-L-alanyl-D-glutamyl-meso-2,6-diaminopimeloyl-D-alanyl-D-alanine + UMP</text>
        <dbReference type="Rhea" id="RHEA:28386"/>
        <dbReference type="ChEBI" id="CHEBI:57865"/>
        <dbReference type="ChEBI" id="CHEBI:60392"/>
        <dbReference type="ChEBI" id="CHEBI:61386"/>
        <dbReference type="ChEBI" id="CHEBI:61387"/>
        <dbReference type="EC" id="2.7.8.13"/>
    </reaction>
</comment>
<comment type="cofactor">
    <cofactor evidence="1">
        <name>Mg(2+)</name>
        <dbReference type="ChEBI" id="CHEBI:18420"/>
    </cofactor>
</comment>
<comment type="pathway">
    <text evidence="1">Cell wall biogenesis; peptidoglycan biosynthesis.</text>
</comment>
<comment type="subcellular location">
    <subcellularLocation>
        <location evidence="1">Cell inner membrane</location>
        <topology evidence="1">Multi-pass membrane protein</topology>
    </subcellularLocation>
</comment>
<comment type="similarity">
    <text evidence="1">Belongs to the glycosyltransferase 4 family. MraY subfamily.</text>
</comment>
<sequence>MIAASFLLNLLIYPFLINLFRKKSVGQYIRKEGPDLHGYKEGTPTMGGILFVLIGLLFGVLSKENGVILTGAFLFFLIGFLDDFLSIAKKNSTGLRAYQKALLQIAAASVVIAFSQPETAVDFFGIKLEMGAWYYLLALIVIVGSSNAMNLTDGLDGLAGWVYISGAIPYWFFLKEKGFSENIIILLSAGVLAFLIFNSKPARIFMGDTGSIALGGTLGVVSVLTKTEFYLIVFFPILVVETLSVILQILSFKLFKRRIFRMAPLHHHFELLSWEEEKIVAVFTIFNLISSLIALEVFGVIG</sequence>
<accession>B9K6P4</accession>
<feature type="chain" id="PRO_1000117203" description="Phospho-N-acetylmuramoyl-pentapeptide-transferase">
    <location>
        <begin position="1"/>
        <end position="302"/>
    </location>
</feature>
<feature type="transmembrane region" description="Helical" evidence="1">
    <location>
        <begin position="1"/>
        <end position="21"/>
    </location>
</feature>
<feature type="transmembrane region" description="Helical" evidence="1">
    <location>
        <begin position="42"/>
        <end position="62"/>
    </location>
</feature>
<feature type="transmembrane region" description="Helical" evidence="1">
    <location>
        <begin position="67"/>
        <end position="87"/>
    </location>
</feature>
<feature type="transmembrane region" description="Helical" evidence="1">
    <location>
        <begin position="101"/>
        <end position="121"/>
    </location>
</feature>
<feature type="transmembrane region" description="Helical" evidence="1">
    <location>
        <begin position="123"/>
        <end position="143"/>
    </location>
</feature>
<feature type="transmembrane region" description="Helical" evidence="1">
    <location>
        <begin position="154"/>
        <end position="174"/>
    </location>
</feature>
<feature type="transmembrane region" description="Helical" evidence="1">
    <location>
        <begin position="178"/>
        <end position="198"/>
    </location>
</feature>
<feature type="transmembrane region" description="Helical" evidence="1">
    <location>
        <begin position="204"/>
        <end position="224"/>
    </location>
</feature>
<feature type="transmembrane region" description="Helical" evidence="1">
    <location>
        <begin position="229"/>
        <end position="249"/>
    </location>
</feature>
<feature type="transmembrane region" description="Helical" evidence="1">
    <location>
        <begin position="279"/>
        <end position="299"/>
    </location>
</feature>
<name>MRAY_THENN</name>